<sequence>MATHSTNEFRGGLKVMVDGDPCSIIDNEFVKPGKGQAFNRVKFRNLKTGRVLERTFKSGETLPAADVVEVEMQYLYNDGEFWHFMTSENYEQHAASKEAVAEAKQWLKEEALCMVTMWNGVPLSVEPPNFVELKITETEPGVRGDTATGGTKRAKLETGAVVRVPLFLNEGEIIKVDTRRGEYVSRAK</sequence>
<keyword id="KW-0963">Cytoplasm</keyword>
<keyword id="KW-0251">Elongation factor</keyword>
<keyword id="KW-0379">Hydroxylation</keyword>
<keyword id="KW-0648">Protein biosynthesis</keyword>
<gene>
    <name evidence="1" type="primary">efp</name>
    <name type="ordered locus">CBUD_0045</name>
</gene>
<dbReference type="EMBL" id="CP000733">
    <property type="protein sequence ID" value="ABS78254.1"/>
    <property type="molecule type" value="Genomic_DNA"/>
</dbReference>
<dbReference type="RefSeq" id="WP_005772139.1">
    <property type="nucleotide sequence ID" value="NC_009727.1"/>
</dbReference>
<dbReference type="SMR" id="A9KEY9"/>
<dbReference type="KEGG" id="cbd:CBUD_0045"/>
<dbReference type="HOGENOM" id="CLU_074944_0_0_6"/>
<dbReference type="UniPathway" id="UPA00345"/>
<dbReference type="Proteomes" id="UP000008555">
    <property type="component" value="Chromosome"/>
</dbReference>
<dbReference type="GO" id="GO:0005737">
    <property type="term" value="C:cytoplasm"/>
    <property type="evidence" value="ECO:0007669"/>
    <property type="project" value="UniProtKB-SubCell"/>
</dbReference>
<dbReference type="GO" id="GO:0003746">
    <property type="term" value="F:translation elongation factor activity"/>
    <property type="evidence" value="ECO:0007669"/>
    <property type="project" value="UniProtKB-UniRule"/>
</dbReference>
<dbReference type="GO" id="GO:0043043">
    <property type="term" value="P:peptide biosynthetic process"/>
    <property type="evidence" value="ECO:0007669"/>
    <property type="project" value="InterPro"/>
</dbReference>
<dbReference type="CDD" id="cd04470">
    <property type="entry name" value="S1_EF-P_repeat_1"/>
    <property type="match status" value="1"/>
</dbReference>
<dbReference type="CDD" id="cd05794">
    <property type="entry name" value="S1_EF-P_repeat_2"/>
    <property type="match status" value="1"/>
</dbReference>
<dbReference type="FunFam" id="2.30.30.30:FF:000003">
    <property type="entry name" value="Elongation factor P"/>
    <property type="match status" value="1"/>
</dbReference>
<dbReference type="FunFam" id="2.40.50.140:FF:000004">
    <property type="entry name" value="Elongation factor P"/>
    <property type="match status" value="1"/>
</dbReference>
<dbReference type="FunFam" id="2.40.50.140:FF:000009">
    <property type="entry name" value="Elongation factor P"/>
    <property type="match status" value="1"/>
</dbReference>
<dbReference type="Gene3D" id="2.30.30.30">
    <property type="match status" value="1"/>
</dbReference>
<dbReference type="Gene3D" id="2.40.50.140">
    <property type="entry name" value="Nucleic acid-binding proteins"/>
    <property type="match status" value="2"/>
</dbReference>
<dbReference type="HAMAP" id="MF_00141">
    <property type="entry name" value="EF_P"/>
    <property type="match status" value="1"/>
</dbReference>
<dbReference type="InterPro" id="IPR015365">
    <property type="entry name" value="Elong-fact-P_C"/>
</dbReference>
<dbReference type="InterPro" id="IPR012340">
    <property type="entry name" value="NA-bd_OB-fold"/>
</dbReference>
<dbReference type="InterPro" id="IPR014722">
    <property type="entry name" value="Rib_uL2_dom2"/>
</dbReference>
<dbReference type="InterPro" id="IPR020599">
    <property type="entry name" value="Transl_elong_fac_P/YeiP"/>
</dbReference>
<dbReference type="InterPro" id="IPR013185">
    <property type="entry name" value="Transl_elong_KOW-like"/>
</dbReference>
<dbReference type="InterPro" id="IPR001059">
    <property type="entry name" value="Transl_elong_P/YeiP_cen"/>
</dbReference>
<dbReference type="InterPro" id="IPR013852">
    <property type="entry name" value="Transl_elong_P/YeiP_CS"/>
</dbReference>
<dbReference type="InterPro" id="IPR011768">
    <property type="entry name" value="Transl_elongation_fac_P"/>
</dbReference>
<dbReference type="InterPro" id="IPR008991">
    <property type="entry name" value="Translation_prot_SH3-like_sf"/>
</dbReference>
<dbReference type="NCBIfam" id="TIGR00038">
    <property type="entry name" value="efp"/>
    <property type="match status" value="1"/>
</dbReference>
<dbReference type="NCBIfam" id="NF001810">
    <property type="entry name" value="PRK00529.1"/>
    <property type="match status" value="1"/>
</dbReference>
<dbReference type="PANTHER" id="PTHR30053">
    <property type="entry name" value="ELONGATION FACTOR P"/>
    <property type="match status" value="1"/>
</dbReference>
<dbReference type="PANTHER" id="PTHR30053:SF12">
    <property type="entry name" value="ELONGATION FACTOR P (EF-P) FAMILY PROTEIN"/>
    <property type="match status" value="1"/>
</dbReference>
<dbReference type="Pfam" id="PF01132">
    <property type="entry name" value="EFP"/>
    <property type="match status" value="1"/>
</dbReference>
<dbReference type="Pfam" id="PF08207">
    <property type="entry name" value="EFP_N"/>
    <property type="match status" value="1"/>
</dbReference>
<dbReference type="Pfam" id="PF09285">
    <property type="entry name" value="Elong-fact-P_C"/>
    <property type="match status" value="1"/>
</dbReference>
<dbReference type="PIRSF" id="PIRSF005901">
    <property type="entry name" value="EF-P"/>
    <property type="match status" value="1"/>
</dbReference>
<dbReference type="SMART" id="SM01185">
    <property type="entry name" value="EFP"/>
    <property type="match status" value="1"/>
</dbReference>
<dbReference type="SMART" id="SM00841">
    <property type="entry name" value="Elong-fact-P_C"/>
    <property type="match status" value="1"/>
</dbReference>
<dbReference type="SUPFAM" id="SSF50249">
    <property type="entry name" value="Nucleic acid-binding proteins"/>
    <property type="match status" value="2"/>
</dbReference>
<dbReference type="SUPFAM" id="SSF50104">
    <property type="entry name" value="Translation proteins SH3-like domain"/>
    <property type="match status" value="1"/>
</dbReference>
<dbReference type="PROSITE" id="PS01275">
    <property type="entry name" value="EFP"/>
    <property type="match status" value="1"/>
</dbReference>
<organism>
    <name type="scientific">Coxiella burnetii (strain Dugway 5J108-111)</name>
    <dbReference type="NCBI Taxonomy" id="434922"/>
    <lineage>
        <taxon>Bacteria</taxon>
        <taxon>Pseudomonadati</taxon>
        <taxon>Pseudomonadota</taxon>
        <taxon>Gammaproteobacteria</taxon>
        <taxon>Legionellales</taxon>
        <taxon>Coxiellaceae</taxon>
        <taxon>Coxiella</taxon>
    </lineage>
</organism>
<evidence type="ECO:0000255" key="1">
    <source>
        <dbReference type="HAMAP-Rule" id="MF_00141"/>
    </source>
</evidence>
<accession>A9KEY9</accession>
<comment type="function">
    <text evidence="1">Involved in peptide bond synthesis. Alleviates ribosome stalling that occurs when 3 or more consecutive Pro residues or the sequence PPG is present in a protein, possibly by augmenting the peptidyl transferase activity of the ribosome. Modification of Lys-34 is required for alleviation.</text>
</comment>
<comment type="pathway">
    <text evidence="1">Protein biosynthesis; polypeptide chain elongation.</text>
</comment>
<comment type="subcellular location">
    <subcellularLocation>
        <location evidence="1">Cytoplasm</location>
    </subcellularLocation>
</comment>
<comment type="PTM">
    <text evidence="1">May be beta-lysylated on the epsilon-amino group of Lys-34 by the combined action of EpmA and EpmB, and then hydroxylated on the C5 position of the same residue by EpmC (if this protein is present). Lysylation is critical for the stimulatory effect of EF-P on peptide-bond formation. The lysylation moiety may extend toward the peptidyltransferase center and stabilize the terminal 3-CCA end of the tRNA. Hydroxylation of the C5 position on Lys-34 may allow additional potential stabilizing hydrogen-bond interactions with the P-tRNA.</text>
</comment>
<comment type="similarity">
    <text evidence="1">Belongs to the elongation factor P family.</text>
</comment>
<protein>
    <recommendedName>
        <fullName evidence="1">Elongation factor P</fullName>
        <shortName evidence="1">EF-P</shortName>
    </recommendedName>
</protein>
<feature type="chain" id="PRO_1000076511" description="Elongation factor P">
    <location>
        <begin position="1"/>
        <end position="188"/>
    </location>
</feature>
<feature type="modified residue" description="N6-(3,6-diaminohexanoyl)-5-hydroxylysine" evidence="1">
    <location>
        <position position="34"/>
    </location>
</feature>
<name>EFP_COXBN</name>
<reference key="1">
    <citation type="journal article" date="2009" name="Infect. Immun.">
        <title>Comparative genomics reveal extensive transposon-mediated genomic plasticity and diversity among potential effector proteins within the genus Coxiella.</title>
        <authorList>
            <person name="Beare P.A."/>
            <person name="Unsworth N."/>
            <person name="Andoh M."/>
            <person name="Voth D.E."/>
            <person name="Omsland A."/>
            <person name="Gilk S.D."/>
            <person name="Williams K.P."/>
            <person name="Sobral B.W."/>
            <person name="Kupko J.J. III"/>
            <person name="Porcella S.F."/>
            <person name="Samuel J.E."/>
            <person name="Heinzen R.A."/>
        </authorList>
    </citation>
    <scope>NUCLEOTIDE SEQUENCE [LARGE SCALE GENOMIC DNA]</scope>
    <source>
        <strain>Dugway 5J108-111</strain>
    </source>
</reference>
<proteinExistence type="inferred from homology"/>